<sequence length="343" mass="38934">MAIRLTHLRKPLAYSRSFDVCIPFFRSISSFEAVEKAIKCAVETKEYLRIPELVVSLKEPYQNSTLFSFLSAFQRHHRIRVIDEILQSFVPVRPRSLPKIVYSSLLTYCLQSSDPLPLSFAILQRTLRSGCLPNPQTHLLLSDAWLERRRGSQSVADIINEMKLIGYSPDTGTCNYLVSSLCAVDKLDEAIKVVEEMSAAGCIPDVESYGAVINSLCLARKTTDVVKIVKEMVSKAGISPRKGMLTKVAAALRANREIWKAIEMIEFVESRDYPVEFESYEVVVEGCLEVREYILAGKVVMRMTDRGFIPYIKVRQKVVERLINIGEWKLACTVRQRVSELRS</sequence>
<protein>
    <recommendedName>
        <fullName>Pentatricopeptide repeat-containing protein At1g06270</fullName>
    </recommendedName>
</protein>
<gene>
    <name type="ordered locus">At1g06270</name>
    <name type="ORF">F9P14.13</name>
</gene>
<comment type="similarity">
    <text evidence="1">Belongs to the PPR family. P subfamily.</text>
</comment>
<comment type="online information" name="Pentatricopeptide repeat proteins">
    <link uri="https://ppr.plantenergy.uwa.edu.au"/>
</comment>
<evidence type="ECO:0000305" key="1"/>
<reference key="1">
    <citation type="journal article" date="2000" name="Nature">
        <title>Sequence and analysis of chromosome 1 of the plant Arabidopsis thaliana.</title>
        <authorList>
            <person name="Theologis A."/>
            <person name="Ecker J.R."/>
            <person name="Palm C.J."/>
            <person name="Federspiel N.A."/>
            <person name="Kaul S."/>
            <person name="White O."/>
            <person name="Alonso J."/>
            <person name="Altafi H."/>
            <person name="Araujo R."/>
            <person name="Bowman C.L."/>
            <person name="Brooks S.Y."/>
            <person name="Buehler E."/>
            <person name="Chan A."/>
            <person name="Chao Q."/>
            <person name="Chen H."/>
            <person name="Cheuk R.F."/>
            <person name="Chin C.W."/>
            <person name="Chung M.K."/>
            <person name="Conn L."/>
            <person name="Conway A.B."/>
            <person name="Conway A.R."/>
            <person name="Creasy T.H."/>
            <person name="Dewar K."/>
            <person name="Dunn P."/>
            <person name="Etgu P."/>
            <person name="Feldblyum T.V."/>
            <person name="Feng J.-D."/>
            <person name="Fong B."/>
            <person name="Fujii C.Y."/>
            <person name="Gill J.E."/>
            <person name="Goldsmith A.D."/>
            <person name="Haas B."/>
            <person name="Hansen N.F."/>
            <person name="Hughes B."/>
            <person name="Huizar L."/>
            <person name="Hunter J.L."/>
            <person name="Jenkins J."/>
            <person name="Johnson-Hopson C."/>
            <person name="Khan S."/>
            <person name="Khaykin E."/>
            <person name="Kim C.J."/>
            <person name="Koo H.L."/>
            <person name="Kremenetskaia I."/>
            <person name="Kurtz D.B."/>
            <person name="Kwan A."/>
            <person name="Lam B."/>
            <person name="Langin-Hooper S."/>
            <person name="Lee A."/>
            <person name="Lee J.M."/>
            <person name="Lenz C.A."/>
            <person name="Li J.H."/>
            <person name="Li Y.-P."/>
            <person name="Lin X."/>
            <person name="Liu S.X."/>
            <person name="Liu Z.A."/>
            <person name="Luros J.S."/>
            <person name="Maiti R."/>
            <person name="Marziali A."/>
            <person name="Militscher J."/>
            <person name="Miranda M."/>
            <person name="Nguyen M."/>
            <person name="Nierman W.C."/>
            <person name="Osborne B.I."/>
            <person name="Pai G."/>
            <person name="Peterson J."/>
            <person name="Pham P.K."/>
            <person name="Rizzo M."/>
            <person name="Rooney T."/>
            <person name="Rowley D."/>
            <person name="Sakano H."/>
            <person name="Salzberg S.L."/>
            <person name="Schwartz J.R."/>
            <person name="Shinn P."/>
            <person name="Southwick A.M."/>
            <person name="Sun H."/>
            <person name="Tallon L.J."/>
            <person name="Tambunga G."/>
            <person name="Toriumi M.J."/>
            <person name="Town C.D."/>
            <person name="Utterback T."/>
            <person name="Van Aken S."/>
            <person name="Vaysberg M."/>
            <person name="Vysotskaia V.S."/>
            <person name="Walker M."/>
            <person name="Wu D."/>
            <person name="Yu G."/>
            <person name="Fraser C.M."/>
            <person name="Venter J.C."/>
            <person name="Davis R.W."/>
        </authorList>
    </citation>
    <scope>NUCLEOTIDE SEQUENCE [LARGE SCALE GENOMIC DNA]</scope>
    <source>
        <strain>cv. Columbia</strain>
    </source>
</reference>
<reference key="2">
    <citation type="journal article" date="2017" name="Plant J.">
        <title>Araport11: a complete reannotation of the Arabidopsis thaliana reference genome.</title>
        <authorList>
            <person name="Cheng C.Y."/>
            <person name="Krishnakumar V."/>
            <person name="Chan A.P."/>
            <person name="Thibaud-Nissen F."/>
            <person name="Schobel S."/>
            <person name="Town C.D."/>
        </authorList>
    </citation>
    <scope>GENOME REANNOTATION</scope>
    <source>
        <strain>cv. Columbia</strain>
    </source>
</reference>
<reference key="3">
    <citation type="journal article" date="2003" name="Science">
        <title>Empirical analysis of transcriptional activity in the Arabidopsis genome.</title>
        <authorList>
            <person name="Yamada K."/>
            <person name="Lim J."/>
            <person name="Dale J.M."/>
            <person name="Chen H."/>
            <person name="Shinn P."/>
            <person name="Palm C.J."/>
            <person name="Southwick A.M."/>
            <person name="Wu H.C."/>
            <person name="Kim C.J."/>
            <person name="Nguyen M."/>
            <person name="Pham P.K."/>
            <person name="Cheuk R.F."/>
            <person name="Karlin-Newmann G."/>
            <person name="Liu S.X."/>
            <person name="Lam B."/>
            <person name="Sakano H."/>
            <person name="Wu T."/>
            <person name="Yu G."/>
            <person name="Miranda M."/>
            <person name="Quach H.L."/>
            <person name="Tripp M."/>
            <person name="Chang C.H."/>
            <person name="Lee J.M."/>
            <person name="Toriumi M.J."/>
            <person name="Chan M.M."/>
            <person name="Tang C.C."/>
            <person name="Onodera C.S."/>
            <person name="Deng J.M."/>
            <person name="Akiyama K."/>
            <person name="Ansari Y."/>
            <person name="Arakawa T."/>
            <person name="Banh J."/>
            <person name="Banno F."/>
            <person name="Bowser L."/>
            <person name="Brooks S.Y."/>
            <person name="Carninci P."/>
            <person name="Chao Q."/>
            <person name="Choy N."/>
            <person name="Enju A."/>
            <person name="Goldsmith A.D."/>
            <person name="Gurjal M."/>
            <person name="Hansen N.F."/>
            <person name="Hayashizaki Y."/>
            <person name="Johnson-Hopson C."/>
            <person name="Hsuan V.W."/>
            <person name="Iida K."/>
            <person name="Karnes M."/>
            <person name="Khan S."/>
            <person name="Koesema E."/>
            <person name="Ishida J."/>
            <person name="Jiang P.X."/>
            <person name="Jones T."/>
            <person name="Kawai J."/>
            <person name="Kamiya A."/>
            <person name="Meyers C."/>
            <person name="Nakajima M."/>
            <person name="Narusaka M."/>
            <person name="Seki M."/>
            <person name="Sakurai T."/>
            <person name="Satou M."/>
            <person name="Tamse R."/>
            <person name="Vaysberg M."/>
            <person name="Wallender E.K."/>
            <person name="Wong C."/>
            <person name="Yamamura Y."/>
            <person name="Yuan S."/>
            <person name="Shinozaki K."/>
            <person name="Davis R.W."/>
            <person name="Theologis A."/>
            <person name="Ecker J.R."/>
        </authorList>
    </citation>
    <scope>NUCLEOTIDE SEQUENCE [LARGE SCALE MRNA]</scope>
    <source>
        <strain>cv. Columbia</strain>
    </source>
</reference>
<reference key="4">
    <citation type="submission" date="2002-03" db="EMBL/GenBank/DDBJ databases">
        <title>Full-length cDNA from Arabidopsis thaliana.</title>
        <authorList>
            <person name="Brover V.V."/>
            <person name="Troukhan M.E."/>
            <person name="Alexandrov N.A."/>
            <person name="Lu Y.-P."/>
            <person name="Flavell R.B."/>
            <person name="Feldmann K.A."/>
        </authorList>
    </citation>
    <scope>NUCLEOTIDE SEQUENCE [LARGE SCALE MRNA]</scope>
</reference>
<reference key="5">
    <citation type="journal article" date="2004" name="Plant Cell">
        <title>Genome-wide analysis of Arabidopsis pentatricopeptide repeat proteins reveals their essential role in organelle biogenesis.</title>
        <authorList>
            <person name="Lurin C."/>
            <person name="Andres C."/>
            <person name="Aubourg S."/>
            <person name="Bellaoui M."/>
            <person name="Bitton F."/>
            <person name="Bruyere C."/>
            <person name="Caboche M."/>
            <person name="Debast C."/>
            <person name="Gualberto J."/>
            <person name="Hoffmann B."/>
            <person name="Lecharny A."/>
            <person name="Le Ret M."/>
            <person name="Martin-Magniette M.-L."/>
            <person name="Mireau H."/>
            <person name="Peeters N."/>
            <person name="Renou J.-P."/>
            <person name="Szurek B."/>
            <person name="Taconnat L."/>
            <person name="Small I."/>
        </authorList>
    </citation>
    <scope>GENE FAMILY</scope>
</reference>
<accession>Q9LNC0</accession>
<keyword id="KW-1185">Reference proteome</keyword>
<keyword id="KW-0677">Repeat</keyword>
<dbReference type="EMBL" id="AC025290">
    <property type="protein sequence ID" value="AAF80224.1"/>
    <property type="molecule type" value="Genomic_DNA"/>
</dbReference>
<dbReference type="EMBL" id="CP002684">
    <property type="protein sequence ID" value="AEE27970.1"/>
    <property type="molecule type" value="Genomic_DNA"/>
</dbReference>
<dbReference type="EMBL" id="AY065382">
    <property type="protein sequence ID" value="AAL38823.1"/>
    <property type="molecule type" value="mRNA"/>
</dbReference>
<dbReference type="EMBL" id="AY096546">
    <property type="protein sequence ID" value="AAM20196.1"/>
    <property type="molecule type" value="mRNA"/>
</dbReference>
<dbReference type="EMBL" id="AY084351">
    <property type="protein sequence ID" value="AAM60933.1"/>
    <property type="molecule type" value="mRNA"/>
</dbReference>
<dbReference type="PIR" id="E86198">
    <property type="entry name" value="E86198"/>
</dbReference>
<dbReference type="RefSeq" id="NP_563765.1">
    <property type="nucleotide sequence ID" value="NM_100509.5"/>
</dbReference>
<dbReference type="SMR" id="Q9LNC0"/>
<dbReference type="BioGRID" id="22379">
    <property type="interactions" value="2"/>
</dbReference>
<dbReference type="FunCoup" id="Q9LNC0">
    <property type="interactions" value="406"/>
</dbReference>
<dbReference type="IntAct" id="Q9LNC0">
    <property type="interactions" value="2"/>
</dbReference>
<dbReference type="STRING" id="3702.Q9LNC0"/>
<dbReference type="PaxDb" id="3702-AT1G06270.1"/>
<dbReference type="EnsemblPlants" id="AT1G06270.1">
    <property type="protein sequence ID" value="AT1G06270.1"/>
    <property type="gene ID" value="AT1G06270"/>
</dbReference>
<dbReference type="GeneID" id="837138"/>
<dbReference type="Gramene" id="AT1G06270.1">
    <property type="protein sequence ID" value="AT1G06270.1"/>
    <property type="gene ID" value="AT1G06270"/>
</dbReference>
<dbReference type="KEGG" id="ath:AT1G06270"/>
<dbReference type="Araport" id="AT1G06270"/>
<dbReference type="TAIR" id="AT1G06270"/>
<dbReference type="eggNOG" id="KOG4197">
    <property type="taxonomic scope" value="Eukaryota"/>
</dbReference>
<dbReference type="HOGENOM" id="CLU_835215_0_0_1"/>
<dbReference type="InParanoid" id="Q9LNC0"/>
<dbReference type="OMA" id="CIPVPQT"/>
<dbReference type="PhylomeDB" id="Q9LNC0"/>
<dbReference type="PRO" id="PR:Q9LNC0"/>
<dbReference type="Proteomes" id="UP000006548">
    <property type="component" value="Chromosome 1"/>
</dbReference>
<dbReference type="ExpressionAtlas" id="Q9LNC0">
    <property type="expression patterns" value="baseline and differential"/>
</dbReference>
<dbReference type="GO" id="GO:0042170">
    <property type="term" value="C:plastid membrane"/>
    <property type="evidence" value="ECO:0007005"/>
    <property type="project" value="TAIR"/>
</dbReference>
<dbReference type="FunFam" id="1.25.40.10:FF:002209">
    <property type="entry name" value="Pentatricopeptide repeat-containing protein At1g06270"/>
    <property type="match status" value="1"/>
</dbReference>
<dbReference type="Gene3D" id="1.25.40.10">
    <property type="entry name" value="Tetratricopeptide repeat domain"/>
    <property type="match status" value="1"/>
</dbReference>
<dbReference type="InterPro" id="IPR002885">
    <property type="entry name" value="Pentatricopeptide_rpt"/>
</dbReference>
<dbReference type="InterPro" id="IPR050667">
    <property type="entry name" value="PPR-containing_protein"/>
</dbReference>
<dbReference type="InterPro" id="IPR011990">
    <property type="entry name" value="TPR-like_helical_dom_sf"/>
</dbReference>
<dbReference type="NCBIfam" id="TIGR00756">
    <property type="entry name" value="PPR"/>
    <property type="match status" value="2"/>
</dbReference>
<dbReference type="PANTHER" id="PTHR47939">
    <property type="entry name" value="MEMBRANE-ASSOCIATED SALT-INDUCIBLE PROTEIN-LIKE"/>
    <property type="match status" value="1"/>
</dbReference>
<dbReference type="PANTHER" id="PTHR47939:SF1">
    <property type="entry name" value="OS04G0684500 PROTEIN"/>
    <property type="match status" value="1"/>
</dbReference>
<dbReference type="Pfam" id="PF13041">
    <property type="entry name" value="PPR_2"/>
    <property type="match status" value="1"/>
</dbReference>
<dbReference type="PROSITE" id="PS51375">
    <property type="entry name" value="PPR"/>
    <property type="match status" value="5"/>
</dbReference>
<name>PPR16_ARATH</name>
<proteinExistence type="evidence at transcript level"/>
<feature type="chain" id="PRO_0000342757" description="Pentatricopeptide repeat-containing protein At1g06270">
    <location>
        <begin position="1"/>
        <end position="343"/>
    </location>
</feature>
<feature type="repeat" description="PPR 1">
    <location>
        <begin position="98"/>
        <end position="133"/>
    </location>
</feature>
<feature type="repeat" description="PPR 2">
    <location>
        <begin position="134"/>
        <end position="169"/>
    </location>
</feature>
<feature type="repeat" description="PPR 3">
    <location>
        <begin position="170"/>
        <end position="204"/>
    </location>
</feature>
<feature type="repeat" description="PPR 4">
    <location>
        <begin position="205"/>
        <end position="240"/>
    </location>
</feature>
<feature type="repeat" description="PPR 5">
    <location>
        <begin position="241"/>
        <end position="275"/>
    </location>
</feature>
<feature type="repeat" description="PPR 6">
    <location>
        <begin position="276"/>
        <end position="310"/>
    </location>
</feature>
<organism>
    <name type="scientific">Arabidopsis thaliana</name>
    <name type="common">Mouse-ear cress</name>
    <dbReference type="NCBI Taxonomy" id="3702"/>
    <lineage>
        <taxon>Eukaryota</taxon>
        <taxon>Viridiplantae</taxon>
        <taxon>Streptophyta</taxon>
        <taxon>Embryophyta</taxon>
        <taxon>Tracheophyta</taxon>
        <taxon>Spermatophyta</taxon>
        <taxon>Magnoliopsida</taxon>
        <taxon>eudicotyledons</taxon>
        <taxon>Gunneridae</taxon>
        <taxon>Pentapetalae</taxon>
        <taxon>rosids</taxon>
        <taxon>malvids</taxon>
        <taxon>Brassicales</taxon>
        <taxon>Brassicaceae</taxon>
        <taxon>Camelineae</taxon>
        <taxon>Arabidopsis</taxon>
    </lineage>
</organism>